<name>RN114_MOUSE</name>
<protein>
    <recommendedName>
        <fullName>E3 ubiquitin-protein ligase RNF114</fullName>
        <ecNumber evidence="1">2.3.2.27</ecNumber>
    </recommendedName>
    <alternativeName>
        <fullName>RING finger protein 114</fullName>
    </alternativeName>
    <alternativeName>
        <fullName evidence="6">RING-type E3 ubiquitin transferase RNF114</fullName>
    </alternativeName>
    <alternativeName>
        <fullName>Zinc finger protein 228</fullName>
    </alternativeName>
    <alternativeName>
        <fullName>Zinc finger protein 313</fullName>
    </alternativeName>
</protein>
<gene>
    <name type="primary">Rnf114</name>
    <name type="synonym">Zfp228</name>
    <name type="synonym">Zfp313</name>
    <name type="synonym">Znf228</name>
    <name type="synonym">Znf313</name>
</gene>
<comment type="function">
    <text evidence="1">E3 ubiquitin-protein ligase that promotes the ubiquitination of various substrates. In turn, participates in the regulation of many biological processes including cell cycle, apoptosis, osteoclastogenesis as well as innate or adaptive immunity. Acts as negative regulator of NF-kappa-B-dependent transcription by promoting the ubiquitination and stabilization of the NF-kappa-B inhibitor TNFAIP3. May promote the ubiquitination of TRAF6 as well. Also acts as a negative regulator of T-cell activation. Inhibits cellular dsRNA responses and interferon production by targeting MAVS component for proteasomal degradation. Ubiquitinates the CDK inhibitor CDKN1A leading to its degradationand probably also CDKN1B and CDKN1C. This activity stimulates cell cycle G1-to-S phase transition and suppresses cellular senescence. May play a role in spermatogenesis.</text>
</comment>
<comment type="catalytic activity">
    <reaction evidence="1">
        <text>S-ubiquitinyl-[E2 ubiquitin-conjugating enzyme]-L-cysteine + [acceptor protein]-L-lysine = [E2 ubiquitin-conjugating enzyme]-L-cysteine + N(6)-ubiquitinyl-[acceptor protein]-L-lysine.</text>
        <dbReference type="EC" id="2.3.2.27"/>
    </reaction>
</comment>
<comment type="pathway">
    <text evidence="1">Protein modification; protein ubiquitination.</text>
</comment>
<comment type="subunit">
    <text evidence="1">Interacts with XAF1, the interaction increases XAF1 stability and proapoptotic effects, and may regulate IFN signaling.</text>
</comment>
<comment type="subcellular location">
    <subcellularLocation>
        <location evidence="1">Cytoplasm</location>
    </subcellularLocation>
    <subcellularLocation>
        <location evidence="1">Nucleus</location>
    </subcellularLocation>
</comment>
<comment type="PTM">
    <text evidence="1">Autoubiquitinated. Polyubiquitinated in the presence of E2 enzymes UBE2D1, UBE2D2 and UBE2D3, but only monoubiquitinated in the presence of UBE2E1.</text>
</comment>
<comment type="disruption phenotype">
    <text evidence="5">Mice show no significant difference of viral resistance or augmented antiviral responses compared to WT when both are infected with virus.</text>
</comment>
<reference key="1">
    <citation type="submission" date="2002-12" db="EMBL/GenBank/DDBJ databases">
        <title>Cloning of mouse homolog of human zinc finger-like gene ZNF228 possibly associated with spermatogenesis.</title>
        <authorList>
            <person name="Zhang S."/>
            <person name="Ma Y.-X."/>
            <person name="Xia Q."/>
            <person name="Xiao C."/>
            <person name="Zhang G."/>
        </authorList>
    </citation>
    <scope>NUCLEOTIDE SEQUENCE [MRNA]</scope>
    <source>
        <strain>Kunming</strain>
        <tissue>Testis</tissue>
    </source>
</reference>
<reference key="2">
    <citation type="journal article" date="2005" name="Science">
        <title>The transcriptional landscape of the mammalian genome.</title>
        <authorList>
            <person name="Carninci P."/>
            <person name="Kasukawa T."/>
            <person name="Katayama S."/>
            <person name="Gough J."/>
            <person name="Frith M.C."/>
            <person name="Maeda N."/>
            <person name="Oyama R."/>
            <person name="Ravasi T."/>
            <person name="Lenhard B."/>
            <person name="Wells C."/>
            <person name="Kodzius R."/>
            <person name="Shimokawa K."/>
            <person name="Bajic V.B."/>
            <person name="Brenner S.E."/>
            <person name="Batalov S."/>
            <person name="Forrest A.R."/>
            <person name="Zavolan M."/>
            <person name="Davis M.J."/>
            <person name="Wilming L.G."/>
            <person name="Aidinis V."/>
            <person name="Allen J.E."/>
            <person name="Ambesi-Impiombato A."/>
            <person name="Apweiler R."/>
            <person name="Aturaliya R.N."/>
            <person name="Bailey T.L."/>
            <person name="Bansal M."/>
            <person name="Baxter L."/>
            <person name="Beisel K.W."/>
            <person name="Bersano T."/>
            <person name="Bono H."/>
            <person name="Chalk A.M."/>
            <person name="Chiu K.P."/>
            <person name="Choudhary V."/>
            <person name="Christoffels A."/>
            <person name="Clutterbuck D.R."/>
            <person name="Crowe M.L."/>
            <person name="Dalla E."/>
            <person name="Dalrymple B.P."/>
            <person name="de Bono B."/>
            <person name="Della Gatta G."/>
            <person name="di Bernardo D."/>
            <person name="Down T."/>
            <person name="Engstrom P."/>
            <person name="Fagiolini M."/>
            <person name="Faulkner G."/>
            <person name="Fletcher C.F."/>
            <person name="Fukushima T."/>
            <person name="Furuno M."/>
            <person name="Futaki S."/>
            <person name="Gariboldi M."/>
            <person name="Georgii-Hemming P."/>
            <person name="Gingeras T.R."/>
            <person name="Gojobori T."/>
            <person name="Green R.E."/>
            <person name="Gustincich S."/>
            <person name="Harbers M."/>
            <person name="Hayashi Y."/>
            <person name="Hensch T.K."/>
            <person name="Hirokawa N."/>
            <person name="Hill D."/>
            <person name="Huminiecki L."/>
            <person name="Iacono M."/>
            <person name="Ikeo K."/>
            <person name="Iwama A."/>
            <person name="Ishikawa T."/>
            <person name="Jakt M."/>
            <person name="Kanapin A."/>
            <person name="Katoh M."/>
            <person name="Kawasawa Y."/>
            <person name="Kelso J."/>
            <person name="Kitamura H."/>
            <person name="Kitano H."/>
            <person name="Kollias G."/>
            <person name="Krishnan S.P."/>
            <person name="Kruger A."/>
            <person name="Kummerfeld S.K."/>
            <person name="Kurochkin I.V."/>
            <person name="Lareau L.F."/>
            <person name="Lazarevic D."/>
            <person name="Lipovich L."/>
            <person name="Liu J."/>
            <person name="Liuni S."/>
            <person name="McWilliam S."/>
            <person name="Madan Babu M."/>
            <person name="Madera M."/>
            <person name="Marchionni L."/>
            <person name="Matsuda H."/>
            <person name="Matsuzawa S."/>
            <person name="Miki H."/>
            <person name="Mignone F."/>
            <person name="Miyake S."/>
            <person name="Morris K."/>
            <person name="Mottagui-Tabar S."/>
            <person name="Mulder N."/>
            <person name="Nakano N."/>
            <person name="Nakauchi H."/>
            <person name="Ng P."/>
            <person name="Nilsson R."/>
            <person name="Nishiguchi S."/>
            <person name="Nishikawa S."/>
            <person name="Nori F."/>
            <person name="Ohara O."/>
            <person name="Okazaki Y."/>
            <person name="Orlando V."/>
            <person name="Pang K.C."/>
            <person name="Pavan W.J."/>
            <person name="Pavesi G."/>
            <person name="Pesole G."/>
            <person name="Petrovsky N."/>
            <person name="Piazza S."/>
            <person name="Reed J."/>
            <person name="Reid J.F."/>
            <person name="Ring B.Z."/>
            <person name="Ringwald M."/>
            <person name="Rost B."/>
            <person name="Ruan Y."/>
            <person name="Salzberg S.L."/>
            <person name="Sandelin A."/>
            <person name="Schneider C."/>
            <person name="Schoenbach C."/>
            <person name="Sekiguchi K."/>
            <person name="Semple C.A."/>
            <person name="Seno S."/>
            <person name="Sessa L."/>
            <person name="Sheng Y."/>
            <person name="Shibata Y."/>
            <person name="Shimada H."/>
            <person name="Shimada K."/>
            <person name="Silva D."/>
            <person name="Sinclair B."/>
            <person name="Sperling S."/>
            <person name="Stupka E."/>
            <person name="Sugiura K."/>
            <person name="Sultana R."/>
            <person name="Takenaka Y."/>
            <person name="Taki K."/>
            <person name="Tammoja K."/>
            <person name="Tan S.L."/>
            <person name="Tang S."/>
            <person name="Taylor M.S."/>
            <person name="Tegner J."/>
            <person name="Teichmann S.A."/>
            <person name="Ueda H.R."/>
            <person name="van Nimwegen E."/>
            <person name="Verardo R."/>
            <person name="Wei C.L."/>
            <person name="Yagi K."/>
            <person name="Yamanishi H."/>
            <person name="Zabarovsky E."/>
            <person name="Zhu S."/>
            <person name="Zimmer A."/>
            <person name="Hide W."/>
            <person name="Bult C."/>
            <person name="Grimmond S.M."/>
            <person name="Teasdale R.D."/>
            <person name="Liu E.T."/>
            <person name="Brusic V."/>
            <person name="Quackenbush J."/>
            <person name="Wahlestedt C."/>
            <person name="Mattick J.S."/>
            <person name="Hume D.A."/>
            <person name="Kai C."/>
            <person name="Sasaki D."/>
            <person name="Tomaru Y."/>
            <person name="Fukuda S."/>
            <person name="Kanamori-Katayama M."/>
            <person name="Suzuki M."/>
            <person name="Aoki J."/>
            <person name="Arakawa T."/>
            <person name="Iida J."/>
            <person name="Imamura K."/>
            <person name="Itoh M."/>
            <person name="Kato T."/>
            <person name="Kawaji H."/>
            <person name="Kawagashira N."/>
            <person name="Kawashima T."/>
            <person name="Kojima M."/>
            <person name="Kondo S."/>
            <person name="Konno H."/>
            <person name="Nakano K."/>
            <person name="Ninomiya N."/>
            <person name="Nishio T."/>
            <person name="Okada M."/>
            <person name="Plessy C."/>
            <person name="Shibata K."/>
            <person name="Shiraki T."/>
            <person name="Suzuki S."/>
            <person name="Tagami M."/>
            <person name="Waki K."/>
            <person name="Watahiki A."/>
            <person name="Okamura-Oho Y."/>
            <person name="Suzuki H."/>
            <person name="Kawai J."/>
            <person name="Hayashizaki Y."/>
        </authorList>
    </citation>
    <scope>NUCLEOTIDE SEQUENCE [LARGE SCALE MRNA]</scope>
    <source>
        <strain>C57BL/6J</strain>
        <strain>NOD</strain>
        <tissue>Aorta</tissue>
        <tissue>Bone marrow</tissue>
        <tissue>Thymus</tissue>
    </source>
</reference>
<reference key="3">
    <citation type="journal article" date="2004" name="Genome Res.">
        <title>The status, quality, and expansion of the NIH full-length cDNA project: the Mammalian Gene Collection (MGC).</title>
        <authorList>
            <consortium name="The MGC Project Team"/>
        </authorList>
    </citation>
    <scope>NUCLEOTIDE SEQUENCE [LARGE SCALE MRNA]</scope>
    <source>
        <strain>C57BL/6J</strain>
        <strain>FVB/N</strain>
        <tissue>Brain</tissue>
        <tissue>Mammary tumor</tissue>
    </source>
</reference>
<reference key="4">
    <citation type="journal article" date="2010" name="Cell">
        <title>A tissue-specific atlas of mouse protein phosphorylation and expression.</title>
        <authorList>
            <person name="Huttlin E.L."/>
            <person name="Jedrychowski M.P."/>
            <person name="Elias J.E."/>
            <person name="Goswami T."/>
            <person name="Rad R."/>
            <person name="Beausoleil S.A."/>
            <person name="Villen J."/>
            <person name="Haas W."/>
            <person name="Sowa M.E."/>
            <person name="Gygi S.P."/>
        </authorList>
    </citation>
    <scope>IDENTIFICATION BY MASS SPECTROMETRY [LARGE SCALE ANALYSIS]</scope>
    <source>
        <tissue>Brain</tissue>
        <tissue>Heart</tissue>
        <tissue>Kidney</tissue>
        <tissue>Liver</tissue>
        <tissue>Lung</tissue>
        <tissue>Spleen</tissue>
        <tissue>Testis</tissue>
    </source>
</reference>
<reference key="5">
    <citation type="journal article" date="2017" name="Cytokine">
        <title>Negative regulation of the RLH signaling by the E3 ubiquitin ligase RNF114.</title>
        <authorList>
            <person name="Lin B."/>
            <person name="Ke Q."/>
            <person name="Li H."/>
            <person name="Pheifer N.S."/>
            <person name="Velliquette D.C."/>
            <person name="Leaman D.W."/>
        </authorList>
    </citation>
    <scope>FUNCTION</scope>
    <scope>DISRUPTION PHENOTYPE</scope>
</reference>
<accession>Q9ET26</accession>
<accession>Q3UFU8</accession>
<accession>Q8K5A2</accession>
<evidence type="ECO:0000250" key="1">
    <source>
        <dbReference type="UniProtKB" id="Q9Y508"/>
    </source>
</evidence>
<evidence type="ECO:0000255" key="2">
    <source>
        <dbReference type="PROSITE-ProRule" id="PRU00175"/>
    </source>
</evidence>
<evidence type="ECO:0000255" key="3">
    <source>
        <dbReference type="PROSITE-ProRule" id="PRU01144"/>
    </source>
</evidence>
<evidence type="ECO:0000256" key="4">
    <source>
        <dbReference type="SAM" id="MobiDB-lite"/>
    </source>
</evidence>
<evidence type="ECO:0000269" key="5">
    <source>
    </source>
</evidence>
<evidence type="ECO:0000305" key="6"/>
<proteinExistence type="evidence at protein level"/>
<feature type="chain" id="PRO_0000056308" description="E3 ubiquitin-protein ligase RNF114">
    <location>
        <begin position="1"/>
        <end position="229"/>
    </location>
</feature>
<feature type="zinc finger region" description="RING-type" evidence="2">
    <location>
        <begin position="30"/>
        <end position="69"/>
    </location>
</feature>
<feature type="zinc finger region" description="C2HC RNF-type" evidence="3">
    <location>
        <begin position="92"/>
        <end position="111"/>
    </location>
</feature>
<feature type="region of interest" description="Disordered" evidence="4">
    <location>
        <begin position="1"/>
        <end position="23"/>
    </location>
</feature>
<feature type="binding site" evidence="3">
    <location>
        <position position="92"/>
    </location>
    <ligand>
        <name>Zn(2+)</name>
        <dbReference type="ChEBI" id="CHEBI:29105"/>
    </ligand>
</feature>
<feature type="binding site" evidence="3">
    <location>
        <position position="95"/>
    </location>
    <ligand>
        <name>Zn(2+)</name>
        <dbReference type="ChEBI" id="CHEBI:29105"/>
    </ligand>
</feature>
<feature type="binding site" evidence="3">
    <location>
        <position position="107"/>
    </location>
    <ligand>
        <name>Zn(2+)</name>
        <dbReference type="ChEBI" id="CHEBI:29105"/>
    </ligand>
</feature>
<feature type="binding site" evidence="3">
    <location>
        <position position="111"/>
    </location>
    <ligand>
        <name>Zn(2+)</name>
        <dbReference type="ChEBI" id="CHEBI:29105"/>
    </ligand>
</feature>
<feature type="modified residue" description="N6-acetyllysine" evidence="1">
    <location>
        <position position="103"/>
    </location>
</feature>
<feature type="modified residue" description="N6-acetyllysine" evidence="1">
    <location>
        <position position="113"/>
    </location>
</feature>
<organism>
    <name type="scientific">Mus musculus</name>
    <name type="common">Mouse</name>
    <dbReference type="NCBI Taxonomy" id="10090"/>
    <lineage>
        <taxon>Eukaryota</taxon>
        <taxon>Metazoa</taxon>
        <taxon>Chordata</taxon>
        <taxon>Craniata</taxon>
        <taxon>Vertebrata</taxon>
        <taxon>Euteleostomi</taxon>
        <taxon>Mammalia</taxon>
        <taxon>Eutheria</taxon>
        <taxon>Euarchontoglires</taxon>
        <taxon>Glires</taxon>
        <taxon>Rodentia</taxon>
        <taxon>Myomorpha</taxon>
        <taxon>Muroidea</taxon>
        <taxon>Muridae</taxon>
        <taxon>Murinae</taxon>
        <taxon>Mus</taxon>
        <taxon>Mus</taxon>
    </lineage>
</organism>
<keyword id="KW-0007">Acetylation</keyword>
<keyword id="KW-0963">Cytoplasm</keyword>
<keyword id="KW-0217">Developmental protein</keyword>
<keyword id="KW-0221">Differentiation</keyword>
<keyword id="KW-0479">Metal-binding</keyword>
<keyword id="KW-0539">Nucleus</keyword>
<keyword id="KW-1185">Reference proteome</keyword>
<keyword id="KW-0744">Spermatogenesis</keyword>
<keyword id="KW-0808">Transferase</keyword>
<keyword id="KW-0832">Ubl conjugation</keyword>
<keyword id="KW-0833">Ubl conjugation pathway</keyword>
<keyword id="KW-0862">Zinc</keyword>
<keyword id="KW-0863">Zinc-finger</keyword>
<dbReference type="EC" id="2.3.2.27" evidence="1"/>
<dbReference type="EMBL" id="AF282919">
    <property type="protein sequence ID" value="AAG01141.2"/>
    <property type="molecule type" value="mRNA"/>
</dbReference>
<dbReference type="EMBL" id="AF502145">
    <property type="protein sequence ID" value="AAM22210.1"/>
    <property type="molecule type" value="mRNA"/>
</dbReference>
<dbReference type="EMBL" id="AK088441">
    <property type="protein sequence ID" value="BAC40355.1"/>
    <property type="molecule type" value="mRNA"/>
</dbReference>
<dbReference type="EMBL" id="AK139030">
    <property type="protein sequence ID" value="BAE23870.1"/>
    <property type="molecule type" value="mRNA"/>
</dbReference>
<dbReference type="EMBL" id="AK148290">
    <property type="protein sequence ID" value="BAE28461.1"/>
    <property type="molecule type" value="mRNA"/>
</dbReference>
<dbReference type="EMBL" id="AK148392">
    <property type="protein sequence ID" value="BAE28527.1"/>
    <property type="molecule type" value="mRNA"/>
</dbReference>
<dbReference type="EMBL" id="AK150086">
    <property type="protein sequence ID" value="BAE29295.1"/>
    <property type="molecule type" value="mRNA"/>
</dbReference>
<dbReference type="EMBL" id="AK150263">
    <property type="protein sequence ID" value="BAE29420.1"/>
    <property type="molecule type" value="mRNA"/>
</dbReference>
<dbReference type="EMBL" id="AK152687">
    <property type="protein sequence ID" value="BAE31418.1"/>
    <property type="molecule type" value="mRNA"/>
</dbReference>
<dbReference type="EMBL" id="AK153452">
    <property type="protein sequence ID" value="BAE32006.1"/>
    <property type="molecule type" value="mRNA"/>
</dbReference>
<dbReference type="EMBL" id="AK159818">
    <property type="protein sequence ID" value="BAE35398.1"/>
    <property type="molecule type" value="mRNA"/>
</dbReference>
<dbReference type="EMBL" id="BC054416">
    <property type="protein sequence ID" value="AAH54416.1"/>
    <property type="molecule type" value="mRNA"/>
</dbReference>
<dbReference type="EMBL" id="BC085146">
    <property type="protein sequence ID" value="AAH85146.1"/>
    <property type="molecule type" value="mRNA"/>
</dbReference>
<dbReference type="CCDS" id="CCDS17101.1"/>
<dbReference type="RefSeq" id="NP_001347859.1">
    <property type="nucleotide sequence ID" value="NM_001360930.1"/>
</dbReference>
<dbReference type="RefSeq" id="NP_109668.2">
    <property type="nucleotide sequence ID" value="NM_030743.5"/>
</dbReference>
<dbReference type="RefSeq" id="XP_006500502.1">
    <property type="nucleotide sequence ID" value="XM_006500439.1"/>
</dbReference>
<dbReference type="BioGRID" id="219874">
    <property type="interactions" value="8"/>
</dbReference>
<dbReference type="FunCoup" id="Q9ET26">
    <property type="interactions" value="1696"/>
</dbReference>
<dbReference type="STRING" id="10090.ENSMUSP00000104837"/>
<dbReference type="iPTMnet" id="Q9ET26"/>
<dbReference type="PhosphoSitePlus" id="Q9ET26"/>
<dbReference type="SwissPalm" id="Q9ET26"/>
<dbReference type="REPRODUCTION-2DPAGE" id="Q9ET26"/>
<dbReference type="jPOST" id="Q9ET26"/>
<dbReference type="PaxDb" id="10090-ENSMUSP00000077197"/>
<dbReference type="PeptideAtlas" id="Q9ET26"/>
<dbReference type="ProteomicsDB" id="300525"/>
<dbReference type="Pumba" id="Q9ET26"/>
<dbReference type="Antibodypedia" id="13722">
    <property type="antibodies" value="185 antibodies from 25 providers"/>
</dbReference>
<dbReference type="DNASU" id="81018"/>
<dbReference type="Ensembl" id="ENSMUST00000078050.7">
    <property type="protein sequence ID" value="ENSMUSP00000077197.7"/>
    <property type="gene ID" value="ENSMUSG00000006418.18"/>
</dbReference>
<dbReference type="Ensembl" id="ENSMUST00000109214.8">
    <property type="protein sequence ID" value="ENSMUSP00000104837.2"/>
    <property type="gene ID" value="ENSMUSG00000006418.18"/>
</dbReference>
<dbReference type="GeneID" id="81018"/>
<dbReference type="KEGG" id="mmu:81018"/>
<dbReference type="UCSC" id="uc008nzv.1">
    <property type="organism name" value="mouse"/>
</dbReference>
<dbReference type="AGR" id="MGI:1933159"/>
<dbReference type="CTD" id="55905"/>
<dbReference type="MGI" id="MGI:1933159">
    <property type="gene designation" value="Rnf114"/>
</dbReference>
<dbReference type="VEuPathDB" id="HostDB:ENSMUSG00000006418"/>
<dbReference type="eggNOG" id="ENOG502QW3F">
    <property type="taxonomic scope" value="Eukaryota"/>
</dbReference>
<dbReference type="GeneTree" id="ENSGT00950000182909"/>
<dbReference type="HOGENOM" id="CLU_092448_1_0_1"/>
<dbReference type="InParanoid" id="Q9ET26"/>
<dbReference type="OMA" id="RTQCGHT"/>
<dbReference type="OrthoDB" id="6270329at2759"/>
<dbReference type="PhylomeDB" id="Q9ET26"/>
<dbReference type="TreeFam" id="TF331012"/>
<dbReference type="Reactome" id="R-MMU-983168">
    <property type="pathway name" value="Antigen processing: Ubiquitination &amp; Proteasome degradation"/>
</dbReference>
<dbReference type="UniPathway" id="UPA00143"/>
<dbReference type="BioGRID-ORCS" id="81018">
    <property type="hits" value="4 hits in 77 CRISPR screens"/>
</dbReference>
<dbReference type="ChiTaRS" id="Rnf114">
    <property type="organism name" value="mouse"/>
</dbReference>
<dbReference type="PRO" id="PR:Q9ET26"/>
<dbReference type="Proteomes" id="UP000000589">
    <property type="component" value="Chromosome 2"/>
</dbReference>
<dbReference type="RNAct" id="Q9ET26">
    <property type="molecule type" value="protein"/>
</dbReference>
<dbReference type="Bgee" id="ENSMUSG00000006418">
    <property type="expression patterns" value="Expressed in animal zygote and 253 other cell types or tissues"/>
</dbReference>
<dbReference type="ExpressionAtlas" id="Q9ET26">
    <property type="expression patterns" value="baseline and differential"/>
</dbReference>
<dbReference type="GO" id="GO:0005829">
    <property type="term" value="C:cytosol"/>
    <property type="evidence" value="ECO:0007669"/>
    <property type="project" value="Ensembl"/>
</dbReference>
<dbReference type="GO" id="GO:0005634">
    <property type="term" value="C:nucleus"/>
    <property type="evidence" value="ECO:0007669"/>
    <property type="project" value="UniProtKB-SubCell"/>
</dbReference>
<dbReference type="GO" id="GO:0005886">
    <property type="term" value="C:plasma membrane"/>
    <property type="evidence" value="ECO:0007669"/>
    <property type="project" value="Ensembl"/>
</dbReference>
<dbReference type="GO" id="GO:0016740">
    <property type="term" value="F:transferase activity"/>
    <property type="evidence" value="ECO:0007669"/>
    <property type="project" value="UniProtKB-KW"/>
</dbReference>
<dbReference type="GO" id="GO:0008270">
    <property type="term" value="F:zinc ion binding"/>
    <property type="evidence" value="ECO:0007669"/>
    <property type="project" value="UniProtKB-KW"/>
</dbReference>
<dbReference type="GO" id="GO:0030154">
    <property type="term" value="P:cell differentiation"/>
    <property type="evidence" value="ECO:0007669"/>
    <property type="project" value="UniProtKB-KW"/>
</dbReference>
<dbReference type="GO" id="GO:0016567">
    <property type="term" value="P:protein ubiquitination"/>
    <property type="evidence" value="ECO:0007669"/>
    <property type="project" value="UniProtKB-UniPathway"/>
</dbReference>
<dbReference type="GO" id="GO:0007283">
    <property type="term" value="P:spermatogenesis"/>
    <property type="evidence" value="ECO:0007669"/>
    <property type="project" value="UniProtKB-KW"/>
</dbReference>
<dbReference type="CDD" id="cd16540">
    <property type="entry name" value="RING-HC_RNF114"/>
    <property type="match status" value="1"/>
</dbReference>
<dbReference type="FunFam" id="3.30.40.10:FF:000408">
    <property type="entry name" value="E3 ubiquitin-protein ligase RNF114"/>
    <property type="match status" value="1"/>
</dbReference>
<dbReference type="Gene3D" id="3.30.160.60">
    <property type="entry name" value="Classic Zinc Finger"/>
    <property type="match status" value="1"/>
</dbReference>
<dbReference type="Gene3D" id="3.30.40.10">
    <property type="entry name" value="Zinc/RING finger domain, C3HC4 (zinc finger)"/>
    <property type="match status" value="1"/>
</dbReference>
<dbReference type="InterPro" id="IPR008598">
    <property type="entry name" value="Di19_Zn-bd"/>
</dbReference>
<dbReference type="InterPro" id="IPR042716">
    <property type="entry name" value="RNF114_RING-HC"/>
</dbReference>
<dbReference type="InterPro" id="IPR051438">
    <property type="entry name" value="RNF_E3_ubiq-protein_ligase"/>
</dbReference>
<dbReference type="InterPro" id="IPR034734">
    <property type="entry name" value="ZF_C2HC_RNF"/>
</dbReference>
<dbReference type="InterPro" id="IPR027370">
    <property type="entry name" value="Znf-RING_euk"/>
</dbReference>
<dbReference type="InterPro" id="IPR013087">
    <property type="entry name" value="Znf_C2H2_type"/>
</dbReference>
<dbReference type="InterPro" id="IPR001841">
    <property type="entry name" value="Znf_RING"/>
</dbReference>
<dbReference type="InterPro" id="IPR013083">
    <property type="entry name" value="Znf_RING/FYVE/PHD"/>
</dbReference>
<dbReference type="InterPro" id="IPR017907">
    <property type="entry name" value="Znf_RING_CS"/>
</dbReference>
<dbReference type="PANTHER" id="PTHR46016:SF3">
    <property type="entry name" value="E3 UBIQUITIN-PROTEIN LIGASE RNF114"/>
    <property type="match status" value="1"/>
</dbReference>
<dbReference type="PANTHER" id="PTHR46016">
    <property type="entry name" value="ZINC FINGER, RING/FYVE/PHD-TYPE"/>
    <property type="match status" value="1"/>
</dbReference>
<dbReference type="Pfam" id="PF05605">
    <property type="entry name" value="zf-Di19"/>
    <property type="match status" value="1"/>
</dbReference>
<dbReference type="Pfam" id="PF13445">
    <property type="entry name" value="zf-RING_UBOX"/>
    <property type="match status" value="1"/>
</dbReference>
<dbReference type="Pfam" id="PF18574">
    <property type="entry name" value="zf_C2HC_14"/>
    <property type="match status" value="1"/>
</dbReference>
<dbReference type="SMART" id="SM00184">
    <property type="entry name" value="RING"/>
    <property type="match status" value="1"/>
</dbReference>
<dbReference type="SMART" id="SM00355">
    <property type="entry name" value="ZnF_C2H2"/>
    <property type="match status" value="2"/>
</dbReference>
<dbReference type="SUPFAM" id="SSF57850">
    <property type="entry name" value="RING/U-box"/>
    <property type="match status" value="1"/>
</dbReference>
<dbReference type="PROSITE" id="PS51803">
    <property type="entry name" value="ZF_C2HC_RNF"/>
    <property type="match status" value="1"/>
</dbReference>
<dbReference type="PROSITE" id="PS00518">
    <property type="entry name" value="ZF_RING_1"/>
    <property type="match status" value="1"/>
</dbReference>
<dbReference type="PROSITE" id="PS50089">
    <property type="entry name" value="ZF_RING_2"/>
    <property type="match status" value="1"/>
</dbReference>
<sequence>MAAAQPESRDGAAQSAKPASETDPLSRFTCPVCLEVFEKPVQVPCGHVFCSACLQECLKPKKPVCGVCRSALAPGVRAVELERQIESIETSCHGCRKNFILSKIRAHVTSCSKYQNYIMEGVKATTKDASLQPRNIPNRYTFPCPYCPEKNFDQEGLVEHCKLTHSTDTKSVVCPICASMPWGDPSYRSANFMEHIQRRHRFSYDTFVDYDVDEDDMINQVLQRSIIDQ</sequence>